<accession>O80624</accession>
<feature type="chain" id="PRO_0000410479" description="Probable membrane-associated kinase regulator 4">
    <location>
        <begin position="1"/>
        <end position="328"/>
    </location>
</feature>
<feature type="region of interest" description="Disordered" evidence="2">
    <location>
        <begin position="213"/>
        <end position="253"/>
    </location>
</feature>
<feature type="compositionally biased region" description="Polar residues" evidence="2">
    <location>
        <begin position="223"/>
        <end position="240"/>
    </location>
</feature>
<proteinExistence type="inferred from homology"/>
<gene>
    <name type="primary">MAKR4</name>
    <name type="ordered locus">At2g39370</name>
    <name type="ORF">F12L6.3</name>
</gene>
<protein>
    <recommendedName>
        <fullName>Probable membrane-associated kinase regulator 4</fullName>
    </recommendedName>
</protein>
<dbReference type="EMBL" id="AC004218">
    <property type="protein sequence ID" value="AAC27828.1"/>
    <property type="molecule type" value="Genomic_DNA"/>
</dbReference>
<dbReference type="EMBL" id="CP002685">
    <property type="protein sequence ID" value="AEC09666.1"/>
    <property type="molecule type" value="Genomic_DNA"/>
</dbReference>
<dbReference type="PIR" id="T00547">
    <property type="entry name" value="T00547"/>
</dbReference>
<dbReference type="RefSeq" id="NP_181469.1">
    <property type="nucleotide sequence ID" value="NM_129494.2"/>
</dbReference>
<dbReference type="FunCoup" id="O80624">
    <property type="interactions" value="774"/>
</dbReference>
<dbReference type="STRING" id="3702.O80624"/>
<dbReference type="PaxDb" id="3702-AT2G39370.1"/>
<dbReference type="ProteomicsDB" id="238627"/>
<dbReference type="EnsemblPlants" id="AT2G39370.1">
    <property type="protein sequence ID" value="AT2G39370.1"/>
    <property type="gene ID" value="AT2G39370"/>
</dbReference>
<dbReference type="GeneID" id="818522"/>
<dbReference type="Gramene" id="AT2G39370.1">
    <property type="protein sequence ID" value="AT2G39370.1"/>
    <property type="gene ID" value="AT2G39370"/>
</dbReference>
<dbReference type="KEGG" id="ath:AT2G39370"/>
<dbReference type="Araport" id="AT2G39370"/>
<dbReference type="TAIR" id="AT2G39370">
    <property type="gene designation" value="MAKR4"/>
</dbReference>
<dbReference type="eggNOG" id="ENOG502RCYF">
    <property type="taxonomic scope" value="Eukaryota"/>
</dbReference>
<dbReference type="HOGENOM" id="CLU_048960_0_0_1"/>
<dbReference type="InParanoid" id="O80624"/>
<dbReference type="OMA" id="CTASPAN"/>
<dbReference type="PhylomeDB" id="O80624"/>
<dbReference type="PRO" id="PR:O80624"/>
<dbReference type="Proteomes" id="UP000006548">
    <property type="component" value="Chromosome 2"/>
</dbReference>
<dbReference type="ExpressionAtlas" id="O80624">
    <property type="expression patterns" value="baseline and differential"/>
</dbReference>
<dbReference type="GO" id="GO:0005886">
    <property type="term" value="C:plasma membrane"/>
    <property type="evidence" value="ECO:0007669"/>
    <property type="project" value="UniProtKB-SubCell"/>
</dbReference>
<dbReference type="GO" id="GO:0009506">
    <property type="term" value="C:plasmodesma"/>
    <property type="evidence" value="ECO:0007005"/>
    <property type="project" value="TAIR"/>
</dbReference>
<dbReference type="GO" id="GO:0019210">
    <property type="term" value="F:kinase inhibitor activity"/>
    <property type="evidence" value="ECO:0007669"/>
    <property type="project" value="InterPro"/>
</dbReference>
<dbReference type="InterPro" id="IPR039620">
    <property type="entry name" value="BKI1/MAKR1/3/4"/>
</dbReference>
<dbReference type="PANTHER" id="PTHR33312">
    <property type="entry name" value="MEMBRANE-ASSOCIATED KINASE REGULATOR 4-RELATED"/>
    <property type="match status" value="1"/>
</dbReference>
<dbReference type="PANTHER" id="PTHR33312:SF5">
    <property type="entry name" value="MEMBRANE-ASSOCIATED KINASE REGULATOR 4-RELATED"/>
    <property type="match status" value="1"/>
</dbReference>
<evidence type="ECO:0000250" key="1"/>
<evidence type="ECO:0000256" key="2">
    <source>
        <dbReference type="SAM" id="MobiDB-lite"/>
    </source>
</evidence>
<reference key="1">
    <citation type="journal article" date="1999" name="Nature">
        <title>Sequence and analysis of chromosome 2 of the plant Arabidopsis thaliana.</title>
        <authorList>
            <person name="Lin X."/>
            <person name="Kaul S."/>
            <person name="Rounsley S.D."/>
            <person name="Shea T.P."/>
            <person name="Benito M.-I."/>
            <person name="Town C.D."/>
            <person name="Fujii C.Y."/>
            <person name="Mason T.M."/>
            <person name="Bowman C.L."/>
            <person name="Barnstead M.E."/>
            <person name="Feldblyum T.V."/>
            <person name="Buell C.R."/>
            <person name="Ketchum K.A."/>
            <person name="Lee J.J."/>
            <person name="Ronning C.M."/>
            <person name="Koo H.L."/>
            <person name="Moffat K.S."/>
            <person name="Cronin L.A."/>
            <person name="Shen M."/>
            <person name="Pai G."/>
            <person name="Van Aken S."/>
            <person name="Umayam L."/>
            <person name="Tallon L.J."/>
            <person name="Gill J.E."/>
            <person name="Adams M.D."/>
            <person name="Carrera A.J."/>
            <person name="Creasy T.H."/>
            <person name="Goodman H.M."/>
            <person name="Somerville C.R."/>
            <person name="Copenhaver G.P."/>
            <person name="Preuss D."/>
            <person name="Nierman W.C."/>
            <person name="White O."/>
            <person name="Eisen J.A."/>
            <person name="Salzberg S.L."/>
            <person name="Fraser C.M."/>
            <person name="Venter J.C."/>
        </authorList>
    </citation>
    <scope>NUCLEOTIDE SEQUENCE [LARGE SCALE GENOMIC DNA]</scope>
    <source>
        <strain>cv. Columbia</strain>
    </source>
</reference>
<reference key="2">
    <citation type="journal article" date="2017" name="Plant J.">
        <title>Araport11: a complete reannotation of the Arabidopsis thaliana reference genome.</title>
        <authorList>
            <person name="Cheng C.Y."/>
            <person name="Krishnakumar V."/>
            <person name="Chan A.P."/>
            <person name="Thibaud-Nissen F."/>
            <person name="Schobel S."/>
            <person name="Town C.D."/>
        </authorList>
    </citation>
    <scope>GENOME REANNOTATION</scope>
    <source>
        <strain>cv. Columbia</strain>
    </source>
</reference>
<reference key="3">
    <citation type="journal article" date="2011" name="Genes Dev.">
        <title>Tyrosine phosphorylation controls brassinosteroid receptor activation by triggering membrane release of its kinase inhibitor.</title>
        <authorList>
            <person name="Jaillais Y."/>
            <person name="Hothorn M."/>
            <person name="Belkhadir Y."/>
            <person name="Dabi T."/>
            <person name="Nimchuk Z.L."/>
            <person name="Meyerowitz E.M."/>
            <person name="Chory J."/>
        </authorList>
    </citation>
    <scope>GENE FAMILY</scope>
    <scope>NOMENCLATURE</scope>
</reference>
<sequence length="328" mass="37139">MAAYLERCDSVEEDYIDMEVTSFTNLVRKTLSNNYPREFEFQMSHLCPLEIDKTTSPADELFYKGKLLPLHLPPRLQMVQKILEDYTFDDEFYSTPLATGTVTTPVTSNTPFESCTVSPAESCQVSKELNPEDYFLEYSDSLEEDDEKKKSWTTKLRLMKQSSLGTKIKASRAYLRSFFGKTSCSDESSCASSAARVADEDSVLRYSRVKPFGQIKTERPKKQSNGSVSGSHRRSFSVSMRRQAAKSSNNKSSNSLGFRPLQFLKRSTSSSSEIENSIQGAILHCKQSQQQKQKQKQYSTVNEVGFCSLSASRIAARDDQEWAQMFRG</sequence>
<organism>
    <name type="scientific">Arabidopsis thaliana</name>
    <name type="common">Mouse-ear cress</name>
    <dbReference type="NCBI Taxonomy" id="3702"/>
    <lineage>
        <taxon>Eukaryota</taxon>
        <taxon>Viridiplantae</taxon>
        <taxon>Streptophyta</taxon>
        <taxon>Embryophyta</taxon>
        <taxon>Tracheophyta</taxon>
        <taxon>Spermatophyta</taxon>
        <taxon>Magnoliopsida</taxon>
        <taxon>eudicotyledons</taxon>
        <taxon>Gunneridae</taxon>
        <taxon>Pentapetalae</taxon>
        <taxon>rosids</taxon>
        <taxon>malvids</taxon>
        <taxon>Brassicales</taxon>
        <taxon>Brassicaceae</taxon>
        <taxon>Camelineae</taxon>
        <taxon>Arabidopsis</taxon>
    </lineage>
</organism>
<keyword id="KW-1003">Cell membrane</keyword>
<keyword id="KW-0472">Membrane</keyword>
<keyword id="KW-1185">Reference proteome</keyword>
<name>MAKR4_ARATH</name>
<comment type="subcellular location">
    <subcellularLocation>
        <location evidence="1">Cell membrane</location>
    </subcellularLocation>
</comment>